<feature type="chain" id="PRO_1000062613" description="Acetyl-coenzyme A carboxylase carboxyl transferase subunit alpha">
    <location>
        <begin position="1"/>
        <end position="319"/>
    </location>
</feature>
<feature type="domain" description="CoA carboxyltransferase C-terminal" evidence="2">
    <location>
        <begin position="35"/>
        <end position="296"/>
    </location>
</feature>
<reference key="1">
    <citation type="journal article" date="2007" name="J. Bacteriol.">
        <title>The genome sequence of avian pathogenic Escherichia coli strain O1:K1:H7 shares strong similarities with human extraintestinal pathogenic E. coli genomes.</title>
        <authorList>
            <person name="Johnson T.J."/>
            <person name="Kariyawasam S."/>
            <person name="Wannemuehler Y."/>
            <person name="Mangiamele P."/>
            <person name="Johnson S.J."/>
            <person name="Doetkott C."/>
            <person name="Skyberg J.A."/>
            <person name="Lynne A.M."/>
            <person name="Johnson J.R."/>
            <person name="Nolan L.K."/>
        </authorList>
    </citation>
    <scope>NUCLEOTIDE SEQUENCE [LARGE SCALE GENOMIC DNA]</scope>
</reference>
<keyword id="KW-0067">ATP-binding</keyword>
<keyword id="KW-0963">Cytoplasm</keyword>
<keyword id="KW-0275">Fatty acid biosynthesis</keyword>
<keyword id="KW-0276">Fatty acid metabolism</keyword>
<keyword id="KW-0444">Lipid biosynthesis</keyword>
<keyword id="KW-0443">Lipid metabolism</keyword>
<keyword id="KW-0547">Nucleotide-binding</keyword>
<keyword id="KW-1185">Reference proteome</keyword>
<keyword id="KW-0808">Transferase</keyword>
<dbReference type="EC" id="2.1.3.15" evidence="1"/>
<dbReference type="EMBL" id="CP000468">
    <property type="protein sequence ID" value="ABI99668.1"/>
    <property type="molecule type" value="Genomic_DNA"/>
</dbReference>
<dbReference type="RefSeq" id="WP_000055742.1">
    <property type="nucleotide sequence ID" value="NZ_CADILS010000027.1"/>
</dbReference>
<dbReference type="SMR" id="A1A7M9"/>
<dbReference type="KEGG" id="ecv:APECO1_1802"/>
<dbReference type="HOGENOM" id="CLU_015486_0_2_6"/>
<dbReference type="UniPathway" id="UPA00655">
    <property type="reaction ID" value="UER00711"/>
</dbReference>
<dbReference type="Proteomes" id="UP000008216">
    <property type="component" value="Chromosome"/>
</dbReference>
<dbReference type="GO" id="GO:0009317">
    <property type="term" value="C:acetyl-CoA carboxylase complex"/>
    <property type="evidence" value="ECO:0007669"/>
    <property type="project" value="InterPro"/>
</dbReference>
<dbReference type="GO" id="GO:0003989">
    <property type="term" value="F:acetyl-CoA carboxylase activity"/>
    <property type="evidence" value="ECO:0007669"/>
    <property type="project" value="InterPro"/>
</dbReference>
<dbReference type="GO" id="GO:0005524">
    <property type="term" value="F:ATP binding"/>
    <property type="evidence" value="ECO:0007669"/>
    <property type="project" value="UniProtKB-KW"/>
</dbReference>
<dbReference type="GO" id="GO:0016743">
    <property type="term" value="F:carboxyl- or carbamoyltransferase activity"/>
    <property type="evidence" value="ECO:0007669"/>
    <property type="project" value="UniProtKB-UniRule"/>
</dbReference>
<dbReference type="GO" id="GO:0006633">
    <property type="term" value="P:fatty acid biosynthetic process"/>
    <property type="evidence" value="ECO:0007669"/>
    <property type="project" value="UniProtKB-KW"/>
</dbReference>
<dbReference type="GO" id="GO:2001295">
    <property type="term" value="P:malonyl-CoA biosynthetic process"/>
    <property type="evidence" value="ECO:0007669"/>
    <property type="project" value="UniProtKB-UniRule"/>
</dbReference>
<dbReference type="FunFam" id="3.90.226.10:FF:000008">
    <property type="entry name" value="Acetyl-coenzyme A carboxylase carboxyl transferase subunit alpha"/>
    <property type="match status" value="1"/>
</dbReference>
<dbReference type="Gene3D" id="3.90.226.10">
    <property type="entry name" value="2-enoyl-CoA Hydratase, Chain A, domain 1"/>
    <property type="match status" value="1"/>
</dbReference>
<dbReference type="HAMAP" id="MF_00823">
    <property type="entry name" value="AcetylCoA_CT_alpha"/>
    <property type="match status" value="1"/>
</dbReference>
<dbReference type="InterPro" id="IPR001095">
    <property type="entry name" value="Acetyl_CoA_COase_a_su"/>
</dbReference>
<dbReference type="InterPro" id="IPR029045">
    <property type="entry name" value="ClpP/crotonase-like_dom_sf"/>
</dbReference>
<dbReference type="InterPro" id="IPR011763">
    <property type="entry name" value="COA_CT_C"/>
</dbReference>
<dbReference type="NCBIfam" id="TIGR00513">
    <property type="entry name" value="accA"/>
    <property type="match status" value="1"/>
</dbReference>
<dbReference type="NCBIfam" id="NF041504">
    <property type="entry name" value="AccA_sub"/>
    <property type="match status" value="1"/>
</dbReference>
<dbReference type="NCBIfam" id="NF004344">
    <property type="entry name" value="PRK05724.1"/>
    <property type="match status" value="1"/>
</dbReference>
<dbReference type="PANTHER" id="PTHR42853">
    <property type="entry name" value="ACETYL-COENZYME A CARBOXYLASE CARBOXYL TRANSFERASE SUBUNIT ALPHA"/>
    <property type="match status" value="1"/>
</dbReference>
<dbReference type="PANTHER" id="PTHR42853:SF3">
    <property type="entry name" value="ACETYL-COENZYME A CARBOXYLASE CARBOXYL TRANSFERASE SUBUNIT ALPHA, CHLOROPLASTIC"/>
    <property type="match status" value="1"/>
</dbReference>
<dbReference type="Pfam" id="PF03255">
    <property type="entry name" value="ACCA"/>
    <property type="match status" value="1"/>
</dbReference>
<dbReference type="PRINTS" id="PR01069">
    <property type="entry name" value="ACCCTRFRASEA"/>
</dbReference>
<dbReference type="SUPFAM" id="SSF52096">
    <property type="entry name" value="ClpP/crotonase"/>
    <property type="match status" value="1"/>
</dbReference>
<dbReference type="PROSITE" id="PS50989">
    <property type="entry name" value="COA_CT_CTER"/>
    <property type="match status" value="1"/>
</dbReference>
<comment type="function">
    <text evidence="1">Component of the acetyl coenzyme A carboxylase (ACC) complex. First, biotin carboxylase catalyzes the carboxylation of biotin on its carrier protein (BCCP) and then the CO(2) group is transferred by the carboxyltransferase to acetyl-CoA to form malonyl-CoA.</text>
</comment>
<comment type="catalytic activity">
    <reaction evidence="1">
        <text>N(6)-carboxybiotinyl-L-lysyl-[protein] + acetyl-CoA = N(6)-biotinyl-L-lysyl-[protein] + malonyl-CoA</text>
        <dbReference type="Rhea" id="RHEA:54728"/>
        <dbReference type="Rhea" id="RHEA-COMP:10505"/>
        <dbReference type="Rhea" id="RHEA-COMP:10506"/>
        <dbReference type="ChEBI" id="CHEBI:57288"/>
        <dbReference type="ChEBI" id="CHEBI:57384"/>
        <dbReference type="ChEBI" id="CHEBI:83144"/>
        <dbReference type="ChEBI" id="CHEBI:83145"/>
        <dbReference type="EC" id="2.1.3.15"/>
    </reaction>
</comment>
<comment type="pathway">
    <text evidence="1">Lipid metabolism; malonyl-CoA biosynthesis; malonyl-CoA from acetyl-CoA: step 1/1.</text>
</comment>
<comment type="subunit">
    <text evidence="1">Acetyl-CoA carboxylase is a heterohexamer composed of biotin carboxyl carrier protein (AccB), biotin carboxylase (AccC) and two subunits each of ACCase subunit alpha (AccA) and ACCase subunit beta (AccD).</text>
</comment>
<comment type="subcellular location">
    <subcellularLocation>
        <location evidence="1">Cytoplasm</location>
    </subcellularLocation>
</comment>
<comment type="similarity">
    <text evidence="1">Belongs to the AccA family.</text>
</comment>
<protein>
    <recommendedName>
        <fullName evidence="1">Acetyl-coenzyme A carboxylase carboxyl transferase subunit alpha</fullName>
        <shortName evidence="1">ACCase subunit alpha</shortName>
        <shortName evidence="1">Acetyl-CoA carboxylase carboxyltransferase subunit alpha</shortName>
        <ecNumber evidence="1">2.1.3.15</ecNumber>
    </recommendedName>
</protein>
<organism>
    <name type="scientific">Escherichia coli O1:K1 / APEC</name>
    <dbReference type="NCBI Taxonomy" id="405955"/>
    <lineage>
        <taxon>Bacteria</taxon>
        <taxon>Pseudomonadati</taxon>
        <taxon>Pseudomonadota</taxon>
        <taxon>Gammaproteobacteria</taxon>
        <taxon>Enterobacterales</taxon>
        <taxon>Enterobacteriaceae</taxon>
        <taxon>Escherichia</taxon>
    </lineage>
</organism>
<proteinExistence type="inferred from homology"/>
<name>ACCA_ECOK1</name>
<gene>
    <name evidence="1" type="primary">accA</name>
    <name type="ordered locus">Ecok1_01750</name>
    <name type="ORF">APECO1_1802</name>
</gene>
<sequence>MSLNFLDFEQPIAELEAKIDSLTAVSRQDEKLDINIDEEVHRLREKSVELTRKIFADLGAWQIAQLARHPQRPYTLDYVRLAFDEFDELAGDRAYADDKAIVGGIARLDGRPVMIIGHQKGRETKEKIRRNFGMPAPEGYRKALRLMQMAERFKMPIITFIDTPGAYPGVGAEERGQSEAIARNLREMSRLGVPVVCTVIGEGGSGGALAIGVGDKVNMLQYSTYSVISPEGCASILWKSADKAPLAAEAMGIIAPRLKELKLIDSIIPEPLGGAHRNPEAMAASLKAQLLTDLADLDVLSTEDLKNRRYQRLMSYGYA</sequence>
<evidence type="ECO:0000255" key="1">
    <source>
        <dbReference type="HAMAP-Rule" id="MF_00823"/>
    </source>
</evidence>
<evidence type="ECO:0000255" key="2">
    <source>
        <dbReference type="PROSITE-ProRule" id="PRU01137"/>
    </source>
</evidence>
<accession>A1A7M9</accession>